<evidence type="ECO:0000250" key="1"/>
<evidence type="ECO:0000255" key="2"/>
<evidence type="ECO:0000305" key="3"/>
<comment type="function">
    <text evidence="1">Core subunit of the mitochondrial membrane respiratory chain NADH dehydrogenase (Complex I) that is believed to belong to the minimal assembly required for catalysis. Complex I functions in the transfer of electrons from NADH to the respiratory chain. The immediate electron acceptor for the enzyme is believed to be ubiquinone (By similarity).</text>
</comment>
<comment type="catalytic activity">
    <reaction>
        <text>a ubiquinone + NADH + 5 H(+)(in) = a ubiquinol + NAD(+) + 4 H(+)(out)</text>
        <dbReference type="Rhea" id="RHEA:29091"/>
        <dbReference type="Rhea" id="RHEA-COMP:9565"/>
        <dbReference type="Rhea" id="RHEA-COMP:9566"/>
        <dbReference type="ChEBI" id="CHEBI:15378"/>
        <dbReference type="ChEBI" id="CHEBI:16389"/>
        <dbReference type="ChEBI" id="CHEBI:17976"/>
        <dbReference type="ChEBI" id="CHEBI:57540"/>
        <dbReference type="ChEBI" id="CHEBI:57945"/>
        <dbReference type="EC" id="7.1.1.2"/>
    </reaction>
</comment>
<comment type="subcellular location">
    <subcellularLocation>
        <location evidence="1">Mitochondrion inner membrane</location>
        <topology evidence="1">Multi-pass membrane protein</topology>
    </subcellularLocation>
</comment>
<comment type="similarity">
    <text evidence="3">Belongs to the complex I subunit 5 family.</text>
</comment>
<sequence length="609" mass="68666">MKVINLFASSIITTLSMLTLPIVLTSTSIYKNKLYPQYVKTTISYAFMISMIPTTMFIYSGQEMIISNWHWMTIQTMKLTLSFKLDHFSMIFVPVALFVTWSIMEFSMWYMHSDPFINRFFKYLLMFLITMMILVTANNLFQLFIGWEGVGIMSFLLIGWWHGRTDANTAALQAVLYNRIGDVGFIMAMAWFLINLNTWELQQIFISHHNNLNMPLMGLLLAATGKSAQFGLHPWLPSAMEGPTPVSALLHSSTMVVAGVFLLIRFHPLMEHNTMMQTTTLCLGAITTLFTAICALTQNDIKKIIAFSTSSQLGLMIVTIGINQPHLAFLHICTHAFFKAMLFMCSGSIIHNLNDEQDIRKMGGLYKVLPFTTTSLIVGSLALTGMPFLTGFYSKDLIIETANTSYTNAWALLLTLVATSMTAAYSTRIMFFTLLGQPRFNPMITINENSPLLINSIKRLLLGSIFAGYLISYNITPTSTPQMTMPYYLKLTALTVTLLGFILALELNLTSQSLKLKYPSNLFKFSSLLGYFPTIIHRYMPMVNLSASQKLASTLLDAIWLESALPKSISYFHMKSSVTISNQKGLIKLYFLSFIITLILALMMINSHE</sequence>
<reference key="1">
    <citation type="journal article" date="1992" name="J. Mol. Evol.">
        <title>The complete mitochondrial DNA sequence of the harbor seal, Phoca vitulina.</title>
        <authorList>
            <person name="Arnason U."/>
            <person name="Johnsson E."/>
        </authorList>
    </citation>
    <scope>NUCLEOTIDE SEQUENCE [GENOMIC DNA]</scope>
</reference>
<accession>Q00542</accession>
<feature type="chain" id="PRO_0000118131" description="NADH-ubiquinone oxidoreductase chain 5">
    <location>
        <begin position="1"/>
        <end position="609"/>
    </location>
</feature>
<feature type="transmembrane region" description="Helical" evidence="2">
    <location>
        <begin position="3"/>
        <end position="23"/>
    </location>
</feature>
<feature type="transmembrane region" description="Helical" evidence="2">
    <location>
        <begin position="46"/>
        <end position="66"/>
    </location>
</feature>
<feature type="transmembrane region" description="Helical" evidence="2">
    <location>
        <begin position="90"/>
        <end position="110"/>
    </location>
</feature>
<feature type="transmembrane region" description="Helical" evidence="2">
    <location>
        <begin position="115"/>
        <end position="135"/>
    </location>
</feature>
<feature type="transmembrane region" description="Helical" evidence="2">
    <location>
        <begin position="140"/>
        <end position="160"/>
    </location>
</feature>
<feature type="transmembrane region" description="Helical" evidence="2">
    <location>
        <begin position="174"/>
        <end position="194"/>
    </location>
</feature>
<feature type="transmembrane region" description="Helical" evidence="2">
    <location>
        <begin position="216"/>
        <end position="236"/>
    </location>
</feature>
<feature type="transmembrane region" description="Helical" evidence="2">
    <location>
        <begin position="244"/>
        <end position="264"/>
    </location>
</feature>
<feature type="transmembrane region" description="Helical" evidence="2">
    <location>
        <begin position="276"/>
        <end position="296"/>
    </location>
</feature>
<feature type="transmembrane region" description="Helical" evidence="2">
    <location>
        <begin position="304"/>
        <end position="323"/>
    </location>
</feature>
<feature type="transmembrane region" description="Helical" evidence="2">
    <location>
        <begin position="328"/>
        <end position="350"/>
    </location>
</feature>
<feature type="transmembrane region" description="Helical" evidence="2">
    <location>
        <begin position="368"/>
        <end position="388"/>
    </location>
</feature>
<feature type="transmembrane region" description="Helical" evidence="2">
    <location>
        <begin position="410"/>
        <end position="432"/>
    </location>
</feature>
<feature type="transmembrane region" description="Helical" evidence="2">
    <location>
        <begin position="460"/>
        <end position="480"/>
    </location>
</feature>
<feature type="transmembrane region" description="Helical" evidence="2">
    <location>
        <begin position="485"/>
        <end position="505"/>
    </location>
</feature>
<feature type="transmembrane region" description="Helical" evidence="2">
    <location>
        <begin position="585"/>
        <end position="605"/>
    </location>
</feature>
<gene>
    <name type="primary">MT-ND5</name>
    <name type="synonym">MTND5</name>
    <name type="synonym">NADH5</name>
    <name type="synonym">ND5</name>
</gene>
<geneLocation type="mitochondrion"/>
<organism>
    <name type="scientific">Phoca vitulina</name>
    <name type="common">Harbor seal</name>
    <dbReference type="NCBI Taxonomy" id="9720"/>
    <lineage>
        <taxon>Eukaryota</taxon>
        <taxon>Metazoa</taxon>
        <taxon>Chordata</taxon>
        <taxon>Craniata</taxon>
        <taxon>Vertebrata</taxon>
        <taxon>Euteleostomi</taxon>
        <taxon>Mammalia</taxon>
        <taxon>Eutheria</taxon>
        <taxon>Laurasiatheria</taxon>
        <taxon>Carnivora</taxon>
        <taxon>Caniformia</taxon>
        <taxon>Pinnipedia</taxon>
        <taxon>Phocidae</taxon>
        <taxon>Phocinae</taxon>
        <taxon>Phoca</taxon>
    </lineage>
</organism>
<keyword id="KW-0249">Electron transport</keyword>
<keyword id="KW-0472">Membrane</keyword>
<keyword id="KW-0496">Mitochondrion</keyword>
<keyword id="KW-0999">Mitochondrion inner membrane</keyword>
<keyword id="KW-0520">NAD</keyword>
<keyword id="KW-0679">Respiratory chain</keyword>
<keyword id="KW-1278">Translocase</keyword>
<keyword id="KW-0812">Transmembrane</keyword>
<keyword id="KW-1133">Transmembrane helix</keyword>
<keyword id="KW-0813">Transport</keyword>
<keyword id="KW-0830">Ubiquinone</keyword>
<name>NU5M_PHOVI</name>
<dbReference type="EC" id="7.1.1.2"/>
<dbReference type="EMBL" id="X63726">
    <property type="protein sequence ID" value="CAA45267.1"/>
    <property type="molecule type" value="Genomic_DNA"/>
</dbReference>
<dbReference type="PIR" id="S26161">
    <property type="entry name" value="S26161"/>
</dbReference>
<dbReference type="RefSeq" id="NP_006938.1">
    <property type="nucleotide sequence ID" value="NC_001325.1"/>
</dbReference>
<dbReference type="SMR" id="Q00542"/>
<dbReference type="GeneID" id="807656"/>
<dbReference type="CTD" id="4540"/>
<dbReference type="OrthoDB" id="22780at33554"/>
<dbReference type="GO" id="GO:0005743">
    <property type="term" value="C:mitochondrial inner membrane"/>
    <property type="evidence" value="ECO:0007669"/>
    <property type="project" value="UniProtKB-SubCell"/>
</dbReference>
<dbReference type="GO" id="GO:0008137">
    <property type="term" value="F:NADH dehydrogenase (ubiquinone) activity"/>
    <property type="evidence" value="ECO:0007669"/>
    <property type="project" value="UniProtKB-EC"/>
</dbReference>
<dbReference type="GO" id="GO:0042773">
    <property type="term" value="P:ATP synthesis coupled electron transport"/>
    <property type="evidence" value="ECO:0007669"/>
    <property type="project" value="InterPro"/>
</dbReference>
<dbReference type="GO" id="GO:0015990">
    <property type="term" value="P:electron transport coupled proton transport"/>
    <property type="evidence" value="ECO:0007669"/>
    <property type="project" value="TreeGrafter"/>
</dbReference>
<dbReference type="InterPro" id="IPR010934">
    <property type="entry name" value="NADH_DH_su5_C"/>
</dbReference>
<dbReference type="InterPro" id="IPR018393">
    <property type="entry name" value="NADHpl_OxRdtase_5_subgr"/>
</dbReference>
<dbReference type="InterPro" id="IPR001750">
    <property type="entry name" value="ND/Mrp_TM"/>
</dbReference>
<dbReference type="InterPro" id="IPR003945">
    <property type="entry name" value="NU5C-like"/>
</dbReference>
<dbReference type="InterPro" id="IPR001516">
    <property type="entry name" value="Proton_antipo_N"/>
</dbReference>
<dbReference type="NCBIfam" id="TIGR01974">
    <property type="entry name" value="NDH_I_L"/>
    <property type="match status" value="1"/>
</dbReference>
<dbReference type="PANTHER" id="PTHR42829">
    <property type="entry name" value="NADH-UBIQUINONE OXIDOREDUCTASE CHAIN 5"/>
    <property type="match status" value="1"/>
</dbReference>
<dbReference type="PANTHER" id="PTHR42829:SF2">
    <property type="entry name" value="NADH-UBIQUINONE OXIDOREDUCTASE CHAIN 5"/>
    <property type="match status" value="1"/>
</dbReference>
<dbReference type="Pfam" id="PF06455">
    <property type="entry name" value="NADH5_C"/>
    <property type="match status" value="1"/>
</dbReference>
<dbReference type="Pfam" id="PF00361">
    <property type="entry name" value="Proton_antipo_M"/>
    <property type="match status" value="1"/>
</dbReference>
<dbReference type="Pfam" id="PF00662">
    <property type="entry name" value="Proton_antipo_N"/>
    <property type="match status" value="1"/>
</dbReference>
<dbReference type="PRINTS" id="PR01434">
    <property type="entry name" value="NADHDHGNASE5"/>
</dbReference>
<protein>
    <recommendedName>
        <fullName>NADH-ubiquinone oxidoreductase chain 5</fullName>
        <ecNumber>7.1.1.2</ecNumber>
    </recommendedName>
    <alternativeName>
        <fullName>NADH dehydrogenase subunit 5</fullName>
    </alternativeName>
</protein>
<proteinExistence type="inferred from homology"/>